<feature type="chain" id="PRO_0000331546" description="Organic solute transporter subunit alpha">
    <location>
        <begin position="1"/>
        <end position="352"/>
    </location>
</feature>
<feature type="topological domain" description="Extracellular" evidence="4">
    <location>
        <begin position="1"/>
        <end position="45"/>
    </location>
</feature>
<feature type="transmembrane region" description="Helical" evidence="4">
    <location>
        <begin position="46"/>
        <end position="66"/>
    </location>
</feature>
<feature type="topological domain" description="Cytoplasmic" evidence="4">
    <location>
        <begin position="67"/>
        <end position="82"/>
    </location>
</feature>
<feature type="transmembrane region" description="Helical" evidence="4">
    <location>
        <begin position="83"/>
        <end position="103"/>
    </location>
</feature>
<feature type="topological domain" description="Extracellular" evidence="4">
    <location>
        <begin position="104"/>
        <end position="108"/>
    </location>
</feature>
<feature type="transmembrane region" description="Helical" evidence="4">
    <location>
        <begin position="109"/>
        <end position="129"/>
    </location>
</feature>
<feature type="topological domain" description="Cytoplasmic" evidence="4">
    <location>
        <begin position="130"/>
        <end position="173"/>
    </location>
</feature>
<feature type="transmembrane region" description="Helical" evidence="4">
    <location>
        <begin position="174"/>
        <end position="194"/>
    </location>
</feature>
<feature type="topological domain" description="Extracellular" evidence="4">
    <location>
        <begin position="195"/>
        <end position="210"/>
    </location>
</feature>
<feature type="transmembrane region" description="Helical" evidence="4">
    <location>
        <begin position="211"/>
        <end position="231"/>
    </location>
</feature>
<feature type="topological domain" description="Cytoplasmic" evidence="4">
    <location>
        <begin position="232"/>
        <end position="250"/>
    </location>
</feature>
<feature type="transmembrane region" description="Helical" evidence="4">
    <location>
        <begin position="251"/>
        <end position="271"/>
    </location>
</feature>
<feature type="topological domain" description="Extracellular" evidence="4">
    <location>
        <begin position="272"/>
        <end position="294"/>
    </location>
</feature>
<feature type="transmembrane region" description="Helical" evidence="4">
    <location>
        <begin position="295"/>
        <end position="312"/>
    </location>
</feature>
<feature type="topological domain" description="Cytoplasmic" evidence="4">
    <location>
        <begin position="313"/>
        <end position="352"/>
    </location>
</feature>
<feature type="glycosylation site" description="N-linked (GlcNAc...) asparagine" evidence="4">
    <location>
        <position position="22"/>
    </location>
</feature>
<name>OSTA_LEUER</name>
<comment type="function">
    <text evidence="5">Essential component of the Ost-alpha/Ost-beta complex, a heterodimer that acts as the intestinal basolateral transporter responsible for the translocation of bile acids (such as taurocholate), steroids (such as estrone sulfate), and eicosanoids (such as prostaglandin E2).</text>
</comment>
<comment type="catalytic activity">
    <reaction evidence="5">
        <text>taurocholate(out) = taurocholate(in)</text>
        <dbReference type="Rhea" id="RHEA:71703"/>
        <dbReference type="ChEBI" id="CHEBI:36257"/>
    </reaction>
</comment>
<comment type="catalytic activity">
    <reaction evidence="5">
        <text>prostaglandin E2(out) = prostaglandin E2(in)</text>
        <dbReference type="Rhea" id="RHEA:50984"/>
        <dbReference type="ChEBI" id="CHEBI:606564"/>
    </reaction>
</comment>
<comment type="catalytic activity">
    <reaction evidence="2">
        <text>estrone 3-sulfate(out) = estrone 3-sulfate(in)</text>
        <dbReference type="Rhea" id="RHEA:71835"/>
        <dbReference type="ChEBI" id="CHEBI:60050"/>
    </reaction>
</comment>
<comment type="catalytic activity">
    <reaction evidence="2">
        <text>dehydroepiandrosterone 3-sulfate(out) = dehydroepiandrosterone 3-sulfate(in)</text>
        <dbReference type="Rhea" id="RHEA:71839"/>
        <dbReference type="ChEBI" id="CHEBI:57905"/>
    </reaction>
</comment>
<comment type="catalytic activity">
    <reaction evidence="3">
        <text>tauroursodeoxycholate(out) = tauroursodeoxycholate(in)</text>
        <dbReference type="Rhea" id="RHEA:71843"/>
        <dbReference type="ChEBI" id="CHEBI:132028"/>
    </reaction>
</comment>
<comment type="catalytic activity">
    <reaction evidence="3">
        <text>glycoursodeoxycholate(out) = glycoursodeoxycholate(in)</text>
        <dbReference type="Rhea" id="RHEA:71847"/>
        <dbReference type="ChEBI" id="CHEBI:132030"/>
    </reaction>
</comment>
<comment type="catalytic activity">
    <reaction evidence="3">
        <text>glycocholate(out) = glycocholate(in)</text>
        <dbReference type="Rhea" id="RHEA:71851"/>
        <dbReference type="ChEBI" id="CHEBI:29746"/>
    </reaction>
</comment>
<comment type="catalytic activity">
    <reaction evidence="3">
        <text>taurochenodeoxycholate(out) = taurochenodeoxycholate(in)</text>
        <dbReference type="Rhea" id="RHEA:71855"/>
        <dbReference type="ChEBI" id="CHEBI:9407"/>
    </reaction>
</comment>
<comment type="catalytic activity">
    <reaction evidence="3">
        <text>glycochenodeoxycholate(out) = glycochenodeoxycholate(in)</text>
        <dbReference type="Rhea" id="RHEA:71859"/>
        <dbReference type="ChEBI" id="CHEBI:36252"/>
    </reaction>
</comment>
<comment type="catalytic activity">
    <reaction evidence="3">
        <text>taurodeoxycholate(out) = taurodeoxycholate(in)</text>
        <dbReference type="Rhea" id="RHEA:71863"/>
        <dbReference type="ChEBI" id="CHEBI:36261"/>
    </reaction>
</comment>
<comment type="catalytic activity">
    <reaction evidence="3">
        <text>glycodeoxycholate(out) = glycodeoxycholate(in)</text>
        <dbReference type="Rhea" id="RHEA:71867"/>
        <dbReference type="ChEBI" id="CHEBI:82982"/>
    </reaction>
</comment>
<comment type="subunit">
    <text evidence="7">Interacts with slc51b. The Ost-alpha/Ost-beta complex is a heterodimer composed of alpha (slc51a) and beta (slc51b) subunit (Probable).</text>
</comment>
<comment type="subcellular location">
    <subcellularLocation>
        <location evidence="1">Cell membrane</location>
        <topology evidence="1">Multi-pass membrane protein</topology>
    </subcellularLocation>
    <subcellularLocation>
        <location evidence="1">Endoplasmic reticulum membrane</location>
        <topology evidence="1">Multi-pass membrane protein</topology>
    </subcellularLocation>
</comment>
<comment type="tissue specificity">
    <text evidence="5">Expressed in liver.</text>
</comment>
<comment type="similarity">
    <text evidence="7">Belongs to the OST-alpha family.</text>
</comment>
<protein>
    <recommendedName>
        <fullName evidence="6">Organic solute transporter subunit alpha</fullName>
        <shortName evidence="6">OST-alpha</shortName>
    </recommendedName>
    <alternativeName>
        <fullName>Solute carrier family 51 subunit alpha</fullName>
    </alternativeName>
</protein>
<dbReference type="EMBL" id="AY027664">
    <property type="protein sequence ID" value="AAK14805.1"/>
    <property type="molecule type" value="mRNA"/>
</dbReference>
<dbReference type="TCDB" id="2.A.82.1.1">
    <property type="family name" value="the organic solute transporter (ost) family"/>
</dbReference>
<dbReference type="GlyCosmos" id="Q90YM5">
    <property type="glycosylation" value="1 site, No reported glycans"/>
</dbReference>
<dbReference type="GO" id="GO:0005789">
    <property type="term" value="C:endoplasmic reticulum membrane"/>
    <property type="evidence" value="ECO:0000250"/>
    <property type="project" value="UniProtKB"/>
</dbReference>
<dbReference type="GO" id="GO:0016020">
    <property type="term" value="C:membrane"/>
    <property type="evidence" value="ECO:0000250"/>
    <property type="project" value="UniProtKB"/>
</dbReference>
<dbReference type="GO" id="GO:0005886">
    <property type="term" value="C:plasma membrane"/>
    <property type="evidence" value="ECO:0000250"/>
    <property type="project" value="UniProtKB"/>
</dbReference>
<dbReference type="GO" id="GO:0032991">
    <property type="term" value="C:protein-containing complex"/>
    <property type="evidence" value="ECO:0000250"/>
    <property type="project" value="UniProtKB"/>
</dbReference>
<dbReference type="GO" id="GO:0046982">
    <property type="term" value="F:protein heterodimerization activity"/>
    <property type="evidence" value="ECO:0000250"/>
    <property type="project" value="UniProtKB"/>
</dbReference>
<dbReference type="GO" id="GO:0042803">
    <property type="term" value="F:protein homodimerization activity"/>
    <property type="evidence" value="ECO:0000250"/>
    <property type="project" value="UniProtKB"/>
</dbReference>
<dbReference type="GO" id="GO:0015721">
    <property type="term" value="P:bile acid and bile salt transport"/>
    <property type="evidence" value="ECO:0000250"/>
    <property type="project" value="UniProtKB"/>
</dbReference>
<dbReference type="InterPro" id="IPR005178">
    <property type="entry name" value="Ostalpha/TMEM184C"/>
</dbReference>
<dbReference type="PANTHER" id="PTHR23423">
    <property type="entry name" value="ORGANIC SOLUTE TRANSPORTER-RELATED"/>
    <property type="match status" value="1"/>
</dbReference>
<dbReference type="Pfam" id="PF03619">
    <property type="entry name" value="Solute_trans_a"/>
    <property type="match status" value="1"/>
</dbReference>
<dbReference type="SMART" id="SM01417">
    <property type="entry name" value="Solute_trans_a"/>
    <property type="match status" value="1"/>
</dbReference>
<reference key="1">
    <citation type="journal article" date="2001" name="Proc. Natl. Acad. Sci. U.S.A.">
        <title>Expression cloning of two genes that together mediate organic solute and steroid transport in the liver of a marine vertebrate.</title>
        <authorList>
            <person name="Wang W."/>
            <person name="Seward D.J."/>
            <person name="Li L."/>
            <person name="Boyer J.L."/>
            <person name="Ballatori N."/>
        </authorList>
    </citation>
    <scope>NUCLEOTIDE SEQUENCE [MRNA]</scope>
    <scope>FUNCTION</scope>
    <scope>PROBABLE SUBUNIT</scope>
    <scope>TISSUE SPECIFICITY</scope>
    <scope>TRANSPORT ACTIVITY</scope>
</reference>
<sequence length="352" mass="39345">MDVAHPEEVTRFSPDILMEKFNVSEACFLPPPISIQLILQLTWLDIGVFAALTAMTVLTIAIYLEIVCYLMDKVKCPIKRKTLMWNSAAPTVIAITSCLGLWVPRAIMFVDMAAAMYFGVGFYLMLLIIVQGYGGEEAMLQHLATHTIRISTGPCCCCCPCLPHIHLTRQKYKIFVLGAFQVAFLRPALFLLGVVLWTNGLYDPDDWSSTSIFLWLNLFLGVSTILGLWPVNVLFRHSKVLMADQKLTCKFALFQAILILSSLQNSIIGTLAGAGHIGCAPPYSARTRGQQMNNQLLIIEMFFVGILTRISYRKRDDRPGHRHVGEVQQIVRECDQPAIADQQADHSSISHI</sequence>
<evidence type="ECO:0000250" key="1"/>
<evidence type="ECO:0000250" key="2">
    <source>
        <dbReference type="UniProtKB" id="Q86UW1"/>
    </source>
</evidence>
<evidence type="ECO:0000250" key="3">
    <source>
        <dbReference type="UniProtKB" id="Q8R000"/>
    </source>
</evidence>
<evidence type="ECO:0000255" key="4"/>
<evidence type="ECO:0000269" key="5">
    <source>
    </source>
</evidence>
<evidence type="ECO:0000303" key="6">
    <source>
    </source>
</evidence>
<evidence type="ECO:0000305" key="7"/>
<gene>
    <name type="primary">slc51a</name>
    <name type="synonym">osta</name>
</gene>
<proteinExistence type="evidence at protein level"/>
<organism>
    <name type="scientific">Leucoraja erinaceus</name>
    <name type="common">Little skate</name>
    <name type="synonym">Raja erinacea</name>
    <dbReference type="NCBI Taxonomy" id="7782"/>
    <lineage>
        <taxon>Eukaryota</taxon>
        <taxon>Metazoa</taxon>
        <taxon>Chordata</taxon>
        <taxon>Craniata</taxon>
        <taxon>Vertebrata</taxon>
        <taxon>Chondrichthyes</taxon>
        <taxon>Elasmobranchii</taxon>
        <taxon>Batoidea</taxon>
        <taxon>Rajiformes</taxon>
        <taxon>Rajidae</taxon>
        <taxon>Leucoraja</taxon>
    </lineage>
</organism>
<accession>Q90YM5</accession>
<keyword id="KW-1003">Cell membrane</keyword>
<keyword id="KW-0256">Endoplasmic reticulum</keyword>
<keyword id="KW-0325">Glycoprotein</keyword>
<keyword id="KW-0445">Lipid transport</keyword>
<keyword id="KW-0472">Membrane</keyword>
<keyword id="KW-0812">Transmembrane</keyword>
<keyword id="KW-1133">Transmembrane helix</keyword>
<keyword id="KW-0813">Transport</keyword>